<reference key="1">
    <citation type="submission" date="2008-01" db="EMBL/GenBank/DDBJ databases">
        <title>Complete sequence of Thermoanaerobacter pseudethanolicus 39E.</title>
        <authorList>
            <person name="Copeland A."/>
            <person name="Lucas S."/>
            <person name="Lapidus A."/>
            <person name="Barry K."/>
            <person name="Glavina del Rio T."/>
            <person name="Dalin E."/>
            <person name="Tice H."/>
            <person name="Pitluck S."/>
            <person name="Bruce D."/>
            <person name="Goodwin L."/>
            <person name="Saunders E."/>
            <person name="Brettin T."/>
            <person name="Detter J.C."/>
            <person name="Han C."/>
            <person name="Schmutz J."/>
            <person name="Larimer F."/>
            <person name="Land M."/>
            <person name="Hauser L."/>
            <person name="Kyrpides N."/>
            <person name="Lykidis A."/>
            <person name="Hemme C."/>
            <person name="Fields M.W."/>
            <person name="He Z."/>
            <person name="Zhou J."/>
            <person name="Richardson P."/>
        </authorList>
    </citation>
    <scope>NUCLEOTIDE SEQUENCE [LARGE SCALE GENOMIC DNA]</scope>
    <source>
        <strain>ATCC 33223 / DSM 2355 / 39E</strain>
    </source>
</reference>
<keyword id="KW-0028">Amino-acid biosynthesis</keyword>
<keyword id="KW-0100">Branched-chain amino acid biosynthesis</keyword>
<keyword id="KW-0460">Magnesium</keyword>
<keyword id="KW-0479">Metal-binding</keyword>
<keyword id="KW-0521">NADP</keyword>
<keyword id="KW-0560">Oxidoreductase</keyword>
<keyword id="KW-1185">Reference proteome</keyword>
<sequence length="331" mass="37042">MAKMYYDKDADLNLLKNKKIAIIGFGSQGHAHALNLKDSGLDVVVGLYEGSKSKERAEKEGLRVYTVEEAAKVADIIMILIPDEKQAKVYKESIEKNLTEGKALAFAHGFNIHFKQIVPPKNVDVFMVAPKGPGHLVRRVYQEGKGVPNLVAVYQDYTGKAFDLALAYAKGIGGTRAGVIETTFKEETETDLFGEQAVLCGGVTELMKAGFETLVEAGYQPEIAYFECVHEMKLIVDLIYEGGFSYMRYSISDTAEFGDYMTGKRIITEETRKEMKKVLSEIQSGKFAKEWLLENQVGRPQYNAIKDKEANHLIEKVGKGLREMMAWIKKE</sequence>
<gene>
    <name evidence="1" type="primary">ilvC</name>
    <name type="ordered locus">Teth39_0014</name>
</gene>
<name>ILVC_THEP3</name>
<dbReference type="EC" id="1.1.1.86" evidence="1"/>
<dbReference type="EMBL" id="CP000924">
    <property type="protein sequence ID" value="ABY93687.1"/>
    <property type="molecule type" value="Genomic_DNA"/>
</dbReference>
<dbReference type="RefSeq" id="WP_003869982.1">
    <property type="nucleotide sequence ID" value="NC_010321.1"/>
</dbReference>
<dbReference type="SMR" id="B0KAH3"/>
<dbReference type="STRING" id="340099.Teth39_0014"/>
<dbReference type="KEGG" id="tpd:Teth39_0014"/>
<dbReference type="eggNOG" id="COG0059">
    <property type="taxonomic scope" value="Bacteria"/>
</dbReference>
<dbReference type="HOGENOM" id="CLU_033821_0_1_9"/>
<dbReference type="UniPathway" id="UPA00047">
    <property type="reaction ID" value="UER00056"/>
</dbReference>
<dbReference type="UniPathway" id="UPA00049">
    <property type="reaction ID" value="UER00060"/>
</dbReference>
<dbReference type="Proteomes" id="UP000002156">
    <property type="component" value="Chromosome"/>
</dbReference>
<dbReference type="GO" id="GO:0005829">
    <property type="term" value="C:cytosol"/>
    <property type="evidence" value="ECO:0007669"/>
    <property type="project" value="TreeGrafter"/>
</dbReference>
<dbReference type="GO" id="GO:0004455">
    <property type="term" value="F:ketol-acid reductoisomerase activity"/>
    <property type="evidence" value="ECO:0007669"/>
    <property type="project" value="UniProtKB-UniRule"/>
</dbReference>
<dbReference type="GO" id="GO:0000287">
    <property type="term" value="F:magnesium ion binding"/>
    <property type="evidence" value="ECO:0007669"/>
    <property type="project" value="UniProtKB-UniRule"/>
</dbReference>
<dbReference type="GO" id="GO:0050661">
    <property type="term" value="F:NADP binding"/>
    <property type="evidence" value="ECO:0007669"/>
    <property type="project" value="InterPro"/>
</dbReference>
<dbReference type="GO" id="GO:0009097">
    <property type="term" value="P:isoleucine biosynthetic process"/>
    <property type="evidence" value="ECO:0007669"/>
    <property type="project" value="UniProtKB-UniRule"/>
</dbReference>
<dbReference type="GO" id="GO:0009099">
    <property type="term" value="P:L-valine biosynthetic process"/>
    <property type="evidence" value="ECO:0007669"/>
    <property type="project" value="UniProtKB-UniRule"/>
</dbReference>
<dbReference type="FunFam" id="3.40.50.720:FF:000023">
    <property type="entry name" value="Ketol-acid reductoisomerase (NADP(+))"/>
    <property type="match status" value="1"/>
</dbReference>
<dbReference type="Gene3D" id="6.10.240.10">
    <property type="match status" value="1"/>
</dbReference>
<dbReference type="Gene3D" id="3.40.50.720">
    <property type="entry name" value="NAD(P)-binding Rossmann-like Domain"/>
    <property type="match status" value="1"/>
</dbReference>
<dbReference type="HAMAP" id="MF_00435">
    <property type="entry name" value="IlvC"/>
    <property type="match status" value="1"/>
</dbReference>
<dbReference type="InterPro" id="IPR008927">
    <property type="entry name" value="6-PGluconate_DH-like_C_sf"/>
</dbReference>
<dbReference type="InterPro" id="IPR003781">
    <property type="entry name" value="CoA-bd"/>
</dbReference>
<dbReference type="InterPro" id="IPR013023">
    <property type="entry name" value="KARI"/>
</dbReference>
<dbReference type="InterPro" id="IPR000506">
    <property type="entry name" value="KARI_C"/>
</dbReference>
<dbReference type="InterPro" id="IPR013116">
    <property type="entry name" value="KARI_N"/>
</dbReference>
<dbReference type="InterPro" id="IPR014359">
    <property type="entry name" value="KARI_prok"/>
</dbReference>
<dbReference type="InterPro" id="IPR036291">
    <property type="entry name" value="NAD(P)-bd_dom_sf"/>
</dbReference>
<dbReference type="NCBIfam" id="TIGR00465">
    <property type="entry name" value="ilvC"/>
    <property type="match status" value="1"/>
</dbReference>
<dbReference type="NCBIfam" id="NF004017">
    <property type="entry name" value="PRK05479.1"/>
    <property type="match status" value="1"/>
</dbReference>
<dbReference type="NCBIfam" id="NF009940">
    <property type="entry name" value="PRK13403.1"/>
    <property type="match status" value="1"/>
</dbReference>
<dbReference type="PANTHER" id="PTHR21371">
    <property type="entry name" value="KETOL-ACID REDUCTOISOMERASE, MITOCHONDRIAL"/>
    <property type="match status" value="1"/>
</dbReference>
<dbReference type="PANTHER" id="PTHR21371:SF1">
    <property type="entry name" value="KETOL-ACID REDUCTOISOMERASE, MITOCHONDRIAL"/>
    <property type="match status" value="1"/>
</dbReference>
<dbReference type="Pfam" id="PF01450">
    <property type="entry name" value="KARI_C"/>
    <property type="match status" value="1"/>
</dbReference>
<dbReference type="Pfam" id="PF07991">
    <property type="entry name" value="KARI_N"/>
    <property type="match status" value="1"/>
</dbReference>
<dbReference type="PIRSF" id="PIRSF000116">
    <property type="entry name" value="IlvC_gammaproteo"/>
    <property type="match status" value="1"/>
</dbReference>
<dbReference type="SMART" id="SM00881">
    <property type="entry name" value="CoA_binding"/>
    <property type="match status" value="1"/>
</dbReference>
<dbReference type="SUPFAM" id="SSF48179">
    <property type="entry name" value="6-phosphogluconate dehydrogenase C-terminal domain-like"/>
    <property type="match status" value="1"/>
</dbReference>
<dbReference type="SUPFAM" id="SSF51735">
    <property type="entry name" value="NAD(P)-binding Rossmann-fold domains"/>
    <property type="match status" value="1"/>
</dbReference>
<dbReference type="PROSITE" id="PS51851">
    <property type="entry name" value="KARI_C"/>
    <property type="match status" value="1"/>
</dbReference>
<dbReference type="PROSITE" id="PS51850">
    <property type="entry name" value="KARI_N"/>
    <property type="match status" value="1"/>
</dbReference>
<evidence type="ECO:0000255" key="1">
    <source>
        <dbReference type="HAMAP-Rule" id="MF_00435"/>
    </source>
</evidence>
<evidence type="ECO:0000255" key="2">
    <source>
        <dbReference type="PROSITE-ProRule" id="PRU01197"/>
    </source>
</evidence>
<evidence type="ECO:0000255" key="3">
    <source>
        <dbReference type="PROSITE-ProRule" id="PRU01198"/>
    </source>
</evidence>
<proteinExistence type="inferred from homology"/>
<organism>
    <name type="scientific">Thermoanaerobacter pseudethanolicus (strain ATCC 33223 / 39E)</name>
    <name type="common">Clostridium thermohydrosulfuricum</name>
    <dbReference type="NCBI Taxonomy" id="340099"/>
    <lineage>
        <taxon>Bacteria</taxon>
        <taxon>Bacillati</taxon>
        <taxon>Bacillota</taxon>
        <taxon>Clostridia</taxon>
        <taxon>Thermoanaerobacterales</taxon>
        <taxon>Thermoanaerobacteraceae</taxon>
        <taxon>Thermoanaerobacter</taxon>
    </lineage>
</organism>
<protein>
    <recommendedName>
        <fullName evidence="1">Ketol-acid reductoisomerase (NADP(+))</fullName>
        <shortName evidence="1">KARI</shortName>
        <ecNumber evidence="1">1.1.1.86</ecNumber>
    </recommendedName>
    <alternativeName>
        <fullName evidence="1">Acetohydroxy-acid isomeroreductase</fullName>
        <shortName evidence="1">AHIR</shortName>
    </alternativeName>
    <alternativeName>
        <fullName evidence="1">Alpha-keto-beta-hydroxylacyl reductoisomerase</fullName>
    </alternativeName>
    <alternativeName>
        <fullName evidence="1">Ketol-acid reductoisomerase type 1</fullName>
    </alternativeName>
    <alternativeName>
        <fullName evidence="1">Ketol-acid reductoisomerase type I</fullName>
    </alternativeName>
</protein>
<accession>B0KAH3</accession>
<feature type="chain" id="PRO_1000191007" description="Ketol-acid reductoisomerase (NADP(+))">
    <location>
        <begin position="1"/>
        <end position="331"/>
    </location>
</feature>
<feature type="domain" description="KARI N-terminal Rossmann" evidence="2">
    <location>
        <begin position="2"/>
        <end position="182"/>
    </location>
</feature>
<feature type="domain" description="KARI C-terminal knotted" evidence="3">
    <location>
        <begin position="183"/>
        <end position="328"/>
    </location>
</feature>
<feature type="active site" evidence="1">
    <location>
        <position position="108"/>
    </location>
</feature>
<feature type="binding site" evidence="1">
    <location>
        <begin position="25"/>
        <end position="28"/>
    </location>
    <ligand>
        <name>NADP(+)</name>
        <dbReference type="ChEBI" id="CHEBI:58349"/>
    </ligand>
</feature>
<feature type="binding site" evidence="1">
    <location>
        <position position="51"/>
    </location>
    <ligand>
        <name>NADP(+)</name>
        <dbReference type="ChEBI" id="CHEBI:58349"/>
    </ligand>
</feature>
<feature type="binding site" evidence="1">
    <location>
        <position position="53"/>
    </location>
    <ligand>
        <name>NADP(+)</name>
        <dbReference type="ChEBI" id="CHEBI:58349"/>
    </ligand>
</feature>
<feature type="binding site" evidence="1">
    <location>
        <begin position="83"/>
        <end position="86"/>
    </location>
    <ligand>
        <name>NADP(+)</name>
        <dbReference type="ChEBI" id="CHEBI:58349"/>
    </ligand>
</feature>
<feature type="binding site" evidence="1">
    <location>
        <position position="134"/>
    </location>
    <ligand>
        <name>NADP(+)</name>
        <dbReference type="ChEBI" id="CHEBI:58349"/>
    </ligand>
</feature>
<feature type="binding site" evidence="1">
    <location>
        <position position="191"/>
    </location>
    <ligand>
        <name>Mg(2+)</name>
        <dbReference type="ChEBI" id="CHEBI:18420"/>
        <label>1</label>
    </ligand>
</feature>
<feature type="binding site" evidence="1">
    <location>
        <position position="191"/>
    </location>
    <ligand>
        <name>Mg(2+)</name>
        <dbReference type="ChEBI" id="CHEBI:18420"/>
        <label>2</label>
    </ligand>
</feature>
<feature type="binding site" evidence="1">
    <location>
        <position position="195"/>
    </location>
    <ligand>
        <name>Mg(2+)</name>
        <dbReference type="ChEBI" id="CHEBI:18420"/>
        <label>1</label>
    </ligand>
</feature>
<feature type="binding site" evidence="1">
    <location>
        <position position="227"/>
    </location>
    <ligand>
        <name>Mg(2+)</name>
        <dbReference type="ChEBI" id="CHEBI:18420"/>
        <label>2</label>
    </ligand>
</feature>
<feature type="binding site" evidence="1">
    <location>
        <position position="231"/>
    </location>
    <ligand>
        <name>Mg(2+)</name>
        <dbReference type="ChEBI" id="CHEBI:18420"/>
        <label>2</label>
    </ligand>
</feature>
<feature type="binding site" evidence="1">
    <location>
        <position position="252"/>
    </location>
    <ligand>
        <name>substrate</name>
    </ligand>
</feature>
<comment type="function">
    <text evidence="1">Involved in the biosynthesis of branched-chain amino acids (BCAA). Catalyzes an alkyl-migration followed by a ketol-acid reduction of (S)-2-acetolactate (S2AL) to yield (R)-2,3-dihydroxy-isovalerate. In the isomerase reaction, S2AL is rearranged via a Mg-dependent methyl migration to produce 3-hydroxy-3-methyl-2-ketobutyrate (HMKB). In the reductase reaction, this 2-ketoacid undergoes a metal-dependent reduction by NADPH to yield (R)-2,3-dihydroxy-isovalerate.</text>
</comment>
<comment type="catalytic activity">
    <reaction evidence="1">
        <text>(2R)-2,3-dihydroxy-3-methylbutanoate + NADP(+) = (2S)-2-acetolactate + NADPH + H(+)</text>
        <dbReference type="Rhea" id="RHEA:22068"/>
        <dbReference type="ChEBI" id="CHEBI:15378"/>
        <dbReference type="ChEBI" id="CHEBI:49072"/>
        <dbReference type="ChEBI" id="CHEBI:57783"/>
        <dbReference type="ChEBI" id="CHEBI:58349"/>
        <dbReference type="ChEBI" id="CHEBI:58476"/>
        <dbReference type="EC" id="1.1.1.86"/>
    </reaction>
</comment>
<comment type="catalytic activity">
    <reaction evidence="1">
        <text>(2R,3R)-2,3-dihydroxy-3-methylpentanoate + NADP(+) = (S)-2-ethyl-2-hydroxy-3-oxobutanoate + NADPH + H(+)</text>
        <dbReference type="Rhea" id="RHEA:13493"/>
        <dbReference type="ChEBI" id="CHEBI:15378"/>
        <dbReference type="ChEBI" id="CHEBI:49256"/>
        <dbReference type="ChEBI" id="CHEBI:49258"/>
        <dbReference type="ChEBI" id="CHEBI:57783"/>
        <dbReference type="ChEBI" id="CHEBI:58349"/>
        <dbReference type="EC" id="1.1.1.86"/>
    </reaction>
</comment>
<comment type="cofactor">
    <cofactor evidence="1">
        <name>Mg(2+)</name>
        <dbReference type="ChEBI" id="CHEBI:18420"/>
    </cofactor>
    <text evidence="1">Binds 2 magnesium ions per subunit.</text>
</comment>
<comment type="pathway">
    <text evidence="1">Amino-acid biosynthesis; L-isoleucine biosynthesis; L-isoleucine from 2-oxobutanoate: step 2/4.</text>
</comment>
<comment type="pathway">
    <text evidence="1">Amino-acid biosynthesis; L-valine biosynthesis; L-valine from pyruvate: step 2/4.</text>
</comment>
<comment type="similarity">
    <text evidence="1">Belongs to the ketol-acid reductoisomerase family.</text>
</comment>